<organism>
    <name type="scientific">Plecturocebus moloch</name>
    <name type="common">Dusky titi monkey</name>
    <name type="synonym">Callicebus moloch</name>
    <dbReference type="NCBI Taxonomy" id="9523"/>
    <lineage>
        <taxon>Eukaryota</taxon>
        <taxon>Metazoa</taxon>
        <taxon>Chordata</taxon>
        <taxon>Craniata</taxon>
        <taxon>Vertebrata</taxon>
        <taxon>Euteleostomi</taxon>
        <taxon>Mammalia</taxon>
        <taxon>Eutheria</taxon>
        <taxon>Euarchontoglires</taxon>
        <taxon>Primates</taxon>
        <taxon>Haplorrhini</taxon>
        <taxon>Platyrrhini</taxon>
        <taxon>Pitheciidae</taxon>
        <taxon>Callicebinae</taxon>
        <taxon>Plecturocebus</taxon>
    </lineage>
</organism>
<feature type="signal peptide" evidence="1">
    <location>
        <begin position="1"/>
        <end position="26"/>
    </location>
</feature>
<feature type="chain" id="PRO_0000420978" description="Apolipoprotein C-I">
    <location>
        <begin position="27"/>
        <end position="86"/>
    </location>
</feature>
<feature type="chain" id="PRO_0000420979" description="Truncated apolipoprotein C-I" evidence="4">
    <location>
        <begin position="29"/>
        <end position="86"/>
    </location>
</feature>
<name>APOC1_PLEMO</name>
<accession>P0DKV4</accession>
<keyword id="KW-0445">Lipid transport</keyword>
<keyword id="KW-0964">Secreted</keyword>
<keyword id="KW-0732">Signal</keyword>
<keyword id="KW-0813">Transport</keyword>
<keyword id="KW-0850">VLDL</keyword>
<proteinExistence type="inferred from homology"/>
<comment type="function">
    <text evidence="2 3">Inhibitor of lipoprotein binding to the low density lipoprotein (LDL) receptor, LDL receptor-related protein, and very low density lipoprotein (VLDL) receptor. Associates with high density lipoproteins (HDL) and the triacylglycerol-rich lipoproteins in the plasma and makes up about 10% of the protein of the VLDL and 2% of that of HDL. Appears to interfere directly with fatty acid uptake and is also the major plasma inhibitor of cholesteryl ester transfer protein (CETP). Binds free fatty acids and reduces their intracellular esterification. Modulates the interaction of APOE with beta-migrating VLDL and inhibits binding of beta-VLDL to the LDL receptor-related protein.</text>
</comment>
<comment type="subcellular location">
    <subcellularLocation>
        <location evidence="2">Secreted</location>
    </subcellularLocation>
</comment>
<comment type="miscellaneous">
    <text evidence="5">Apolipoprotein C-I is present in acidic (APOC1A) and basic (APOC1B) forms in P.paniscus, P.abelii and P.troglodytes and perhaps also in baboons and macaques. The two genes for ApoC-I arose through a duplication process that occurred after the divergence of New World monkeys from the human lineage. In human, the acidic form has become a pseudogene sometime between the divergence of bonobos and chimpanzees from the human lineage and the appearance of the Denisovans. Pseudogenization resulted when the codon for the penultimate amino acid in the signal sequence was changed to a stop codon.</text>
</comment>
<comment type="similarity">
    <text evidence="6">Belongs to the apolipoprotein C1 family.</text>
</comment>
<sequence>MRLFLSLPVLVVALLTILEGPGPAQGAPEAVDTSTGLDKLKEFGNTLEDKVREFFNRVKESDIPAKTRNWFSETLQKVKEKLRIES</sequence>
<protein>
    <recommendedName>
        <fullName>Apolipoprotein C-I</fullName>
        <shortName>Apo-CI</shortName>
        <shortName>ApoC-I</shortName>
    </recommendedName>
    <alternativeName>
        <fullName>Apolipoprotein C1</fullName>
    </alternativeName>
    <component>
        <recommendedName>
            <fullName>Truncated apolipoprotein C-I</fullName>
        </recommendedName>
    </component>
</protein>
<reference key="1">
    <citation type="submission" date="2004-12" db="EMBL/GenBank/DDBJ databases">
        <authorList>
            <person name="Cheng J.-F."/>
            <person name="Hamilton M."/>
            <person name="Peng Y."/>
            <person name="Hosseini R."/>
            <person name="Peng Z."/>
            <person name="Malinov I."/>
            <person name="Rubin E.M."/>
        </authorList>
    </citation>
    <scope>NUCLEOTIDE SEQUENCE [LARGE SCALE GENOMIC DNA]</scope>
</reference>
<reference key="2">
    <citation type="unpublished observations" date="2012-11">
        <authorList>
            <person name="Puppione D.L."/>
        </authorList>
    </citation>
    <scope>IDENTIFICATION</scope>
</reference>
<reference key="3">
    <citation type="journal article" date="2013" name="Front. Biol.">
        <title>Proteogenomic Review of the Changes in Primate apoC-I during Evolution.</title>
        <authorList>
            <person name="Puppione D."/>
            <person name="Whitelegge J.P."/>
        </authorList>
    </citation>
    <scope>REVIEW</scope>
</reference>
<reference key="4">
    <citation type="journal article" date="2014" name="Comp. Biochem. Physiol.">
        <title>Higher primates, but not New World monkeys, have a duplicate set of enhancers flanking their apoC-I genes.</title>
        <authorList>
            <person name="Puppione D.L."/>
        </authorList>
    </citation>
    <scope>GENE DUPLICATION</scope>
</reference>
<dbReference type="EMBL" id="AC146285">
    <property type="status" value="NOT_ANNOTATED_CDS"/>
    <property type="molecule type" value="Genomic_DNA"/>
</dbReference>
<dbReference type="SMR" id="P0DKV4"/>
<dbReference type="GO" id="GO:0034364">
    <property type="term" value="C:high-density lipoprotein particle"/>
    <property type="evidence" value="ECO:0007669"/>
    <property type="project" value="TreeGrafter"/>
</dbReference>
<dbReference type="GO" id="GO:0034361">
    <property type="term" value="C:very-low-density lipoprotein particle"/>
    <property type="evidence" value="ECO:0007669"/>
    <property type="project" value="UniProtKB-KW"/>
</dbReference>
<dbReference type="GO" id="GO:0005504">
    <property type="term" value="F:fatty acid binding"/>
    <property type="evidence" value="ECO:0007669"/>
    <property type="project" value="TreeGrafter"/>
</dbReference>
<dbReference type="GO" id="GO:0004859">
    <property type="term" value="F:phospholipase inhibitor activity"/>
    <property type="evidence" value="ECO:0007669"/>
    <property type="project" value="TreeGrafter"/>
</dbReference>
<dbReference type="GO" id="GO:0006869">
    <property type="term" value="P:lipid transport"/>
    <property type="evidence" value="ECO:0007669"/>
    <property type="project" value="UniProtKB-KW"/>
</dbReference>
<dbReference type="GO" id="GO:0042157">
    <property type="term" value="P:lipoprotein metabolic process"/>
    <property type="evidence" value="ECO:0007669"/>
    <property type="project" value="InterPro"/>
</dbReference>
<dbReference type="GO" id="GO:0032375">
    <property type="term" value="P:negative regulation of cholesterol transport"/>
    <property type="evidence" value="ECO:0007669"/>
    <property type="project" value="TreeGrafter"/>
</dbReference>
<dbReference type="GO" id="GO:0050995">
    <property type="term" value="P:negative regulation of lipid catabolic process"/>
    <property type="evidence" value="ECO:0007669"/>
    <property type="project" value="TreeGrafter"/>
</dbReference>
<dbReference type="GO" id="GO:0010916">
    <property type="term" value="P:negative regulation of very-low-density lipoprotein particle clearance"/>
    <property type="evidence" value="ECO:0007669"/>
    <property type="project" value="TreeGrafter"/>
</dbReference>
<dbReference type="GO" id="GO:0006641">
    <property type="term" value="P:triglyceride metabolic process"/>
    <property type="evidence" value="ECO:0007669"/>
    <property type="project" value="TreeGrafter"/>
</dbReference>
<dbReference type="GO" id="GO:0034447">
    <property type="term" value="P:very-low-density lipoprotein particle clearance"/>
    <property type="evidence" value="ECO:0007669"/>
    <property type="project" value="TreeGrafter"/>
</dbReference>
<dbReference type="Gene3D" id="4.10.260.30">
    <property type="entry name" value="Apolipoprotein C-I"/>
    <property type="match status" value="1"/>
</dbReference>
<dbReference type="InterPro" id="IPR043081">
    <property type="entry name" value="ApoC-1_sf"/>
</dbReference>
<dbReference type="InterPro" id="IPR006781">
    <property type="entry name" value="ApoC-I"/>
</dbReference>
<dbReference type="PANTHER" id="PTHR16565">
    <property type="entry name" value="APOLIPOPROTEIN C-I"/>
    <property type="match status" value="1"/>
</dbReference>
<dbReference type="PANTHER" id="PTHR16565:SF2">
    <property type="entry name" value="APOLIPOPROTEIN C-I"/>
    <property type="match status" value="1"/>
</dbReference>
<dbReference type="Pfam" id="PF04691">
    <property type="entry name" value="ApoC-I"/>
    <property type="match status" value="1"/>
</dbReference>
<evidence type="ECO:0000250" key="1"/>
<evidence type="ECO:0000250" key="2">
    <source>
        <dbReference type="UniProtKB" id="P02654"/>
    </source>
</evidence>
<evidence type="ECO:0000250" key="3">
    <source>
        <dbReference type="UniProtKB" id="P33047"/>
    </source>
</evidence>
<evidence type="ECO:0000250" key="4">
    <source>
        <dbReference type="UniProtKB" id="P86336"/>
    </source>
</evidence>
<evidence type="ECO:0000303" key="5">
    <source>
    </source>
</evidence>
<evidence type="ECO:0000305" key="6"/>
<gene>
    <name type="primary">APOC1</name>
</gene>